<keyword id="KW-0007">Acetylation</keyword>
<keyword id="KW-0025">Alternative splicing</keyword>
<keyword id="KW-0175">Coiled coil</keyword>
<keyword id="KW-0963">Cytoplasm</keyword>
<keyword id="KW-0333">Golgi apparatus</keyword>
<keyword id="KW-0472">Membrane</keyword>
<keyword id="KW-0597">Phosphoprotein</keyword>
<keyword id="KW-1267">Proteomics identification</keyword>
<keyword id="KW-1185">Reference proteome</keyword>
<evidence type="ECO:0000250" key="1">
    <source>
        <dbReference type="UniProtKB" id="P55937"/>
    </source>
</evidence>
<evidence type="ECO:0000255" key="2"/>
<evidence type="ECO:0000256" key="3">
    <source>
        <dbReference type="SAM" id="MobiDB-lite"/>
    </source>
</evidence>
<evidence type="ECO:0000269" key="4">
    <source>
    </source>
</evidence>
<evidence type="ECO:0000269" key="5">
    <source>
    </source>
</evidence>
<evidence type="ECO:0000269" key="6">
    <source>
    </source>
</evidence>
<evidence type="ECO:0000303" key="7">
    <source>
    </source>
</evidence>
<evidence type="ECO:0000303" key="8">
    <source ref="3"/>
</evidence>
<evidence type="ECO:0000305" key="9"/>
<evidence type="ECO:0007744" key="10">
    <source>
    </source>
</evidence>
<evidence type="ECO:0007744" key="11">
    <source>
    </source>
</evidence>
<evidence type="ECO:0007744" key="12">
    <source>
    </source>
</evidence>
<evidence type="ECO:0007744" key="13">
    <source>
    </source>
</evidence>
<evidence type="ECO:0007744" key="14">
    <source>
    </source>
</evidence>
<evidence type="ECO:0007744" key="15">
    <source>
    </source>
</evidence>
<gene>
    <name type="primary">GOLGA3</name>
</gene>
<proteinExistence type="evidence at protein level"/>
<protein>
    <recommendedName>
        <fullName>Golgin subfamily A member 3</fullName>
    </recommendedName>
    <alternativeName>
        <fullName>Golgi complex-associated protein of 170 kDa</fullName>
        <shortName>GCP170</shortName>
    </alternativeName>
    <alternativeName>
        <fullName>Golgin-160</fullName>
    </alternativeName>
</protein>
<dbReference type="EMBL" id="D63997">
    <property type="protein sequence ID" value="BAA23661.1"/>
    <property type="status" value="ALT_FRAME"/>
    <property type="molecule type" value="mRNA"/>
</dbReference>
<dbReference type="EMBL" id="AF485338">
    <property type="protein sequence ID" value="AAL93149.1"/>
    <property type="molecule type" value="mRNA"/>
</dbReference>
<dbReference type="EMBL" id="AB027133">
    <property type="protein sequence ID" value="BAB71953.1"/>
    <property type="molecule type" value="mRNA"/>
</dbReference>
<dbReference type="EMBL" id="BC060826">
    <property type="protein sequence ID" value="AAH60826.1"/>
    <property type="status" value="ALT_SEQ"/>
    <property type="molecule type" value="mRNA"/>
</dbReference>
<dbReference type="EMBL" id="BC142658">
    <property type="protein sequence ID" value="AAI42659.1"/>
    <property type="molecule type" value="mRNA"/>
</dbReference>
<dbReference type="EMBL" id="BC146675">
    <property type="protein sequence ID" value="AAI46676.1"/>
    <property type="molecule type" value="mRNA"/>
</dbReference>
<dbReference type="EMBL" id="L06148">
    <property type="protein sequence ID" value="AAA35921.1"/>
    <property type="status" value="ALT_INIT"/>
    <property type="molecule type" value="mRNA"/>
</dbReference>
<dbReference type="CCDS" id="CCDS53846.1">
    <molecule id="Q08378-4"/>
</dbReference>
<dbReference type="CCDS" id="CCDS9281.1">
    <molecule id="Q08378-1"/>
</dbReference>
<dbReference type="PIR" id="JH0820">
    <property type="entry name" value="JH0820"/>
</dbReference>
<dbReference type="RefSeq" id="NP_001166028.1">
    <molecule id="Q08378-4"/>
    <property type="nucleotide sequence ID" value="NM_001172557.2"/>
</dbReference>
<dbReference type="RefSeq" id="NP_001376612.1">
    <molecule id="Q08378-1"/>
    <property type="nucleotide sequence ID" value="NM_001389683.1"/>
</dbReference>
<dbReference type="RefSeq" id="NP_001376613.1">
    <molecule id="Q08378-1"/>
    <property type="nucleotide sequence ID" value="NM_001389684.1"/>
</dbReference>
<dbReference type="RefSeq" id="NP_001376614.1">
    <molecule id="Q08378-1"/>
    <property type="nucleotide sequence ID" value="NM_001389685.1"/>
</dbReference>
<dbReference type="RefSeq" id="NP_005886.2">
    <molecule id="Q08378-1"/>
    <property type="nucleotide sequence ID" value="NM_005895.3"/>
</dbReference>
<dbReference type="RefSeq" id="XP_006719799.1">
    <property type="nucleotide sequence ID" value="XM_006719736.3"/>
</dbReference>
<dbReference type="RefSeq" id="XP_006719800.1">
    <property type="nucleotide sequence ID" value="XM_006719737.3"/>
</dbReference>
<dbReference type="RefSeq" id="XP_024304708.1">
    <molecule id="Q08378-1"/>
    <property type="nucleotide sequence ID" value="XM_024448940.2"/>
</dbReference>
<dbReference type="RefSeq" id="XP_024304709.1">
    <molecule id="Q08378-1"/>
    <property type="nucleotide sequence ID" value="XM_024448941.2"/>
</dbReference>
<dbReference type="RefSeq" id="XP_047284661.1">
    <molecule id="Q08378-1"/>
    <property type="nucleotide sequence ID" value="XM_047428705.1"/>
</dbReference>
<dbReference type="RefSeq" id="XP_047284662.1">
    <molecule id="Q08378-1"/>
    <property type="nucleotide sequence ID" value="XM_047428706.1"/>
</dbReference>
<dbReference type="RefSeq" id="XP_047284663.1">
    <molecule id="Q08378-1"/>
    <property type="nucleotide sequence ID" value="XM_047428707.1"/>
</dbReference>
<dbReference type="RefSeq" id="XP_047284664.1">
    <molecule id="Q08378-1"/>
    <property type="nucleotide sequence ID" value="XM_047428708.1"/>
</dbReference>
<dbReference type="RefSeq" id="XP_047284665.1">
    <molecule id="Q08378-1"/>
    <property type="nucleotide sequence ID" value="XM_047428709.1"/>
</dbReference>
<dbReference type="RefSeq" id="XP_054227731.1">
    <molecule id="Q08378-1"/>
    <property type="nucleotide sequence ID" value="XM_054371756.1"/>
</dbReference>
<dbReference type="RefSeq" id="XP_054227732.1">
    <molecule id="Q08378-1"/>
    <property type="nucleotide sequence ID" value="XM_054371757.1"/>
</dbReference>
<dbReference type="RefSeq" id="XP_054227733.1">
    <molecule id="Q08378-1"/>
    <property type="nucleotide sequence ID" value="XM_054371758.1"/>
</dbReference>
<dbReference type="RefSeq" id="XP_054227734.1">
    <molecule id="Q08378-1"/>
    <property type="nucleotide sequence ID" value="XM_054371759.1"/>
</dbReference>
<dbReference type="RefSeq" id="XP_054227735.1">
    <molecule id="Q08378-1"/>
    <property type="nucleotide sequence ID" value="XM_054371760.1"/>
</dbReference>
<dbReference type="RefSeq" id="XP_054227736.1">
    <molecule id="Q08378-1"/>
    <property type="nucleotide sequence ID" value="XM_054371761.1"/>
</dbReference>
<dbReference type="RefSeq" id="XP_054227737.1">
    <molecule id="Q08378-1"/>
    <property type="nucleotide sequence ID" value="XM_054371762.1"/>
</dbReference>
<dbReference type="SMR" id="Q08378"/>
<dbReference type="BioGRID" id="109064">
    <property type="interactions" value="249"/>
</dbReference>
<dbReference type="CORUM" id="Q08378"/>
<dbReference type="FunCoup" id="Q08378">
    <property type="interactions" value="2604"/>
</dbReference>
<dbReference type="IntAct" id="Q08378">
    <property type="interactions" value="73"/>
</dbReference>
<dbReference type="MINT" id="Q08378"/>
<dbReference type="STRING" id="9606.ENSP00000204726"/>
<dbReference type="GlyCosmos" id="Q08378">
    <property type="glycosylation" value="1 site, 1 glycan"/>
</dbReference>
<dbReference type="GlyGen" id="Q08378">
    <property type="glycosylation" value="5 sites, 1 O-linked glycan (4 sites)"/>
</dbReference>
<dbReference type="iPTMnet" id="Q08378"/>
<dbReference type="MetOSite" id="Q08378"/>
<dbReference type="PhosphoSitePlus" id="Q08378"/>
<dbReference type="SwissPalm" id="Q08378"/>
<dbReference type="BioMuta" id="GOLGA3"/>
<dbReference type="DMDM" id="32470610"/>
<dbReference type="jPOST" id="Q08378"/>
<dbReference type="MassIVE" id="Q08378"/>
<dbReference type="PaxDb" id="9606-ENSP00000204726"/>
<dbReference type="PeptideAtlas" id="Q08378"/>
<dbReference type="ProteomicsDB" id="58601">
    <molecule id="Q08378-1"/>
</dbReference>
<dbReference type="ProteomicsDB" id="58602">
    <molecule id="Q08378-2"/>
</dbReference>
<dbReference type="ProteomicsDB" id="58603">
    <molecule id="Q08378-4"/>
</dbReference>
<dbReference type="Pumba" id="Q08378"/>
<dbReference type="Antibodypedia" id="32127">
    <property type="antibodies" value="201 antibodies from 31 providers"/>
</dbReference>
<dbReference type="DNASU" id="2802"/>
<dbReference type="Ensembl" id="ENST00000204726.9">
    <molecule id="Q08378-1"/>
    <property type="protein sequence ID" value="ENSP00000204726.3"/>
    <property type="gene ID" value="ENSG00000090615.16"/>
</dbReference>
<dbReference type="Ensembl" id="ENST00000450791.8">
    <molecule id="Q08378-1"/>
    <property type="protein sequence ID" value="ENSP00000410378.2"/>
    <property type="gene ID" value="ENSG00000090615.16"/>
</dbReference>
<dbReference type="Ensembl" id="ENST00000456883.7">
    <molecule id="Q08378-2"/>
    <property type="protein sequence ID" value="ENSP00000409303.2"/>
    <property type="gene ID" value="ENSG00000090615.16"/>
</dbReference>
<dbReference type="Ensembl" id="ENST00000545875.4">
    <molecule id="Q08378-4"/>
    <property type="protein sequence ID" value="ENSP00000442603.1"/>
    <property type="gene ID" value="ENSG00000090615.16"/>
</dbReference>
<dbReference type="GeneID" id="2802"/>
<dbReference type="KEGG" id="hsa:2802"/>
<dbReference type="MANE-Select" id="ENST00000450791.8">
    <property type="protein sequence ID" value="ENSP00000410378.2"/>
    <property type="RefSeq nucleotide sequence ID" value="NM_001389683.1"/>
    <property type="RefSeq protein sequence ID" value="NP_001376612.1"/>
</dbReference>
<dbReference type="UCSC" id="uc001ukz.1">
    <molecule id="Q08378-1"/>
    <property type="organism name" value="human"/>
</dbReference>
<dbReference type="AGR" id="HGNC:4426"/>
<dbReference type="CTD" id="2802"/>
<dbReference type="DisGeNET" id="2802"/>
<dbReference type="GeneCards" id="GOLGA3"/>
<dbReference type="HGNC" id="HGNC:4426">
    <property type="gene designation" value="GOLGA3"/>
</dbReference>
<dbReference type="HPA" id="ENSG00000090615">
    <property type="expression patterns" value="Low tissue specificity"/>
</dbReference>
<dbReference type="MIM" id="602581">
    <property type="type" value="gene"/>
</dbReference>
<dbReference type="neXtProt" id="NX_Q08378"/>
<dbReference type="OpenTargets" id="ENSG00000090615"/>
<dbReference type="PharmGKB" id="PA28807"/>
<dbReference type="VEuPathDB" id="HostDB:ENSG00000090615"/>
<dbReference type="eggNOG" id="ENOG502QU6P">
    <property type="taxonomic scope" value="Eukaryota"/>
</dbReference>
<dbReference type="GeneTree" id="ENSGT00950000183078"/>
<dbReference type="HOGENOM" id="CLU_005285_1_0_1"/>
<dbReference type="InParanoid" id="Q08378"/>
<dbReference type="OMA" id="QDDQHAQ"/>
<dbReference type="OrthoDB" id="2286360at2759"/>
<dbReference type="PAN-GO" id="Q08378">
    <property type="GO annotations" value="1 GO annotation based on evolutionary models"/>
</dbReference>
<dbReference type="PhylomeDB" id="Q08378"/>
<dbReference type="TreeFam" id="TF332014"/>
<dbReference type="PathwayCommons" id="Q08378"/>
<dbReference type="Reactome" id="R-HSA-9696270">
    <property type="pathway name" value="RND2 GTPase cycle"/>
</dbReference>
<dbReference type="SignaLink" id="Q08378"/>
<dbReference type="SIGNOR" id="Q08378"/>
<dbReference type="BioGRID-ORCS" id="2802">
    <property type="hits" value="16 hits in 1166 CRISPR screens"/>
</dbReference>
<dbReference type="CD-CODE" id="F3208D05">
    <property type="entry name" value="Golgin condensate"/>
</dbReference>
<dbReference type="ChiTaRS" id="GOLGA3">
    <property type="organism name" value="human"/>
</dbReference>
<dbReference type="GeneWiki" id="GOLGA3"/>
<dbReference type="GenomeRNAi" id="2802"/>
<dbReference type="Pharos" id="Q08378">
    <property type="development level" value="Tbio"/>
</dbReference>
<dbReference type="PRO" id="PR:Q08378"/>
<dbReference type="Proteomes" id="UP000005640">
    <property type="component" value="Chromosome 12"/>
</dbReference>
<dbReference type="RNAct" id="Q08378">
    <property type="molecule type" value="protein"/>
</dbReference>
<dbReference type="Bgee" id="ENSG00000090615">
    <property type="expression patterns" value="Expressed in tendon of biceps brachii and 211 other cell types or tissues"/>
</dbReference>
<dbReference type="ExpressionAtlas" id="Q08378">
    <property type="expression patterns" value="baseline and differential"/>
</dbReference>
<dbReference type="GO" id="GO:0005829">
    <property type="term" value="C:cytosol"/>
    <property type="evidence" value="ECO:0000314"/>
    <property type="project" value="UniProtKB"/>
</dbReference>
<dbReference type="GO" id="GO:0005794">
    <property type="term" value="C:Golgi apparatus"/>
    <property type="evidence" value="ECO:0000314"/>
    <property type="project" value="HPA"/>
</dbReference>
<dbReference type="GO" id="GO:0032580">
    <property type="term" value="C:Golgi cisterna membrane"/>
    <property type="evidence" value="ECO:0007669"/>
    <property type="project" value="UniProtKB-SubCell"/>
</dbReference>
<dbReference type="GO" id="GO:0000139">
    <property type="term" value="C:Golgi membrane"/>
    <property type="evidence" value="ECO:0000314"/>
    <property type="project" value="UniProtKB"/>
</dbReference>
<dbReference type="GO" id="GO:0016020">
    <property type="term" value="C:membrane"/>
    <property type="evidence" value="ECO:0007005"/>
    <property type="project" value="UniProtKB"/>
</dbReference>
<dbReference type="GO" id="GO:0005730">
    <property type="term" value="C:nucleolus"/>
    <property type="evidence" value="ECO:0000314"/>
    <property type="project" value="HPA"/>
</dbReference>
<dbReference type="GO" id="GO:0005654">
    <property type="term" value="C:nucleoplasm"/>
    <property type="evidence" value="ECO:0000314"/>
    <property type="project" value="HPA"/>
</dbReference>
<dbReference type="GO" id="GO:0045296">
    <property type="term" value="F:cadherin binding"/>
    <property type="evidence" value="ECO:0007005"/>
    <property type="project" value="BHF-UCL"/>
</dbReference>
<dbReference type="Gene3D" id="1.10.287.1490">
    <property type="match status" value="1"/>
</dbReference>
<dbReference type="InterPro" id="IPR051841">
    <property type="entry name" value="MT-Golgi_org_protein"/>
</dbReference>
<dbReference type="PANTHER" id="PTHR18902:SF26">
    <property type="entry name" value="GOLGIN SUBFAMILY A MEMBER 3"/>
    <property type="match status" value="1"/>
</dbReference>
<dbReference type="PANTHER" id="PTHR18902">
    <property type="entry name" value="NUCLEAR MITOTIC APPARATUS PROTEIN 1-RELATED"/>
    <property type="match status" value="1"/>
</dbReference>
<name>GOGA3_HUMAN</name>
<comment type="function">
    <text>Golgi auto-antigen; probably involved in maintaining Golgi structure.</text>
</comment>
<comment type="subunit">
    <text evidence="5 6">Homodimer. Interacts with GOLGA7. Isoform 1 interacts with GOPC while isoform 3 does not.</text>
</comment>
<comment type="subcellular location">
    <subcellularLocation>
        <location>Cytoplasm</location>
    </subcellularLocation>
    <subcellularLocation>
        <location>Golgi apparatus</location>
        <location>Golgi stack membrane</location>
        <topology>Peripheral membrane protein</topology>
    </subcellularLocation>
</comment>
<comment type="alternative products">
    <event type="alternative splicing"/>
    <isoform>
        <id>Q08378-1</id>
        <name>1</name>
        <name>Golgin-160B</name>
        <sequence type="displayed"/>
    </isoform>
    <isoform>
        <id>Q08378-2</id>
        <name>2</name>
        <sequence type="described" ref="VSP_007728 VSP_007729"/>
    </isoform>
    <isoform>
        <id>Q08378-4</id>
        <name>3</name>
        <sequence type="described" ref="VSP_038000 VSP_038001"/>
    </isoform>
</comment>
<comment type="tissue specificity">
    <text evidence="6">Expressed in all tissues tested. Expressed in liver, testis, lung, heart, salivary gland and kidney.</text>
</comment>
<comment type="domain">
    <text>Extended rod-like protein with coiled-coil domains.</text>
</comment>
<comment type="PTM">
    <text>Cleaved by caspases in apoptotic cells.</text>
</comment>
<comment type="miscellaneous">
    <molecule>Isoform 2</molecule>
    <text evidence="9">May be due to an intron retention.</text>
</comment>
<comment type="sequence caution" evidence="9">
    <conflict type="erroneous initiation">
        <sequence resource="EMBL-CDS" id="AAA35921"/>
    </conflict>
</comment>
<comment type="sequence caution" evidence="9">
    <conflict type="miscellaneous discrepancy">
        <sequence resource="EMBL-CDS" id="AAH60826"/>
    </conflict>
    <text>Contaminating sequence. Potential poly-A sequence.</text>
</comment>
<comment type="sequence caution" evidence="9">
    <conflict type="frameshift">
        <sequence resource="EMBL-CDS" id="BAA23661"/>
    </conflict>
</comment>
<feature type="chain" id="PRO_0000190057" description="Golgin subfamily A member 3">
    <location>
        <begin position="1"/>
        <end position="1498"/>
    </location>
</feature>
<feature type="region of interest" description="Disordered" evidence="3">
    <location>
        <begin position="1"/>
        <end position="118"/>
    </location>
</feature>
<feature type="region of interest" description="Interaction with GOPC" evidence="6">
    <location>
        <begin position="121"/>
        <end position="141"/>
    </location>
</feature>
<feature type="region of interest" description="Disordered" evidence="3">
    <location>
        <begin position="166"/>
        <end position="195"/>
    </location>
</feature>
<feature type="region of interest" description="Golgi-targeting domain">
    <location>
        <begin position="172"/>
        <end position="257"/>
    </location>
</feature>
<feature type="region of interest" description="Disordered" evidence="3">
    <location>
        <begin position="216"/>
        <end position="325"/>
    </location>
</feature>
<feature type="region of interest" description="Disordered" evidence="3">
    <location>
        <begin position="789"/>
        <end position="809"/>
    </location>
</feature>
<feature type="region of interest" description="Disordered" evidence="3">
    <location>
        <begin position="974"/>
        <end position="993"/>
    </location>
</feature>
<feature type="region of interest" description="Disordered" evidence="3">
    <location>
        <begin position="1376"/>
        <end position="1400"/>
    </location>
</feature>
<feature type="region of interest" description="Disordered" evidence="3">
    <location>
        <begin position="1440"/>
        <end position="1498"/>
    </location>
</feature>
<feature type="coiled-coil region" evidence="2">
    <location>
        <begin position="394"/>
        <end position="1459"/>
    </location>
</feature>
<feature type="compositionally biased region" description="Pro residues" evidence="3">
    <location>
        <begin position="27"/>
        <end position="36"/>
    </location>
</feature>
<feature type="compositionally biased region" description="Pro residues" evidence="3">
    <location>
        <begin position="71"/>
        <end position="81"/>
    </location>
</feature>
<feature type="compositionally biased region" description="Polar residues" evidence="3">
    <location>
        <begin position="173"/>
        <end position="184"/>
    </location>
</feature>
<feature type="compositionally biased region" description="Polar residues" evidence="3">
    <location>
        <begin position="269"/>
        <end position="291"/>
    </location>
</feature>
<feature type="compositionally biased region" description="Low complexity" evidence="3">
    <location>
        <begin position="315"/>
        <end position="324"/>
    </location>
</feature>
<feature type="compositionally biased region" description="Basic and acidic residues" evidence="3">
    <location>
        <begin position="789"/>
        <end position="801"/>
    </location>
</feature>
<feature type="compositionally biased region" description="Basic and acidic residues" evidence="3">
    <location>
        <begin position="1376"/>
        <end position="1387"/>
    </location>
</feature>
<feature type="compositionally biased region" description="Basic and acidic residues" evidence="3">
    <location>
        <begin position="1440"/>
        <end position="1452"/>
    </location>
</feature>
<feature type="site" description="Cleavage; by caspase-2">
    <location>
        <begin position="59"/>
        <end position="60"/>
    </location>
</feature>
<feature type="site" description="Cleavage; by caspase-3">
    <location>
        <begin position="139"/>
        <end position="140"/>
    </location>
</feature>
<feature type="site" description="Cleavage; by caspase-7">
    <location>
        <begin position="311"/>
        <end position="312"/>
    </location>
</feature>
<feature type="modified residue" description="N-acetylmethionine" evidence="10 12 13">
    <location>
        <position position="1"/>
    </location>
</feature>
<feature type="modified residue" description="Phosphoserine" evidence="15">
    <location>
        <position position="18"/>
    </location>
</feature>
<feature type="modified residue" description="Phosphoserine" evidence="1">
    <location>
        <position position="57"/>
    </location>
</feature>
<feature type="modified residue" description="Phosphoserine" evidence="14">
    <location>
        <position position="272"/>
    </location>
</feature>
<feature type="modified residue" description="Phosphoserine" evidence="11 14">
    <location>
        <position position="385"/>
    </location>
</feature>
<feature type="modified residue" description="Phosphoserine" evidence="15">
    <location>
        <position position="389"/>
    </location>
</feature>
<feature type="modified residue" description="Phosphoserine" evidence="14">
    <location>
        <position position="465"/>
    </location>
</feature>
<feature type="modified residue" description="Phosphoserine" evidence="15">
    <location>
        <position position="983"/>
    </location>
</feature>
<feature type="modified residue" description="Phosphoserine" evidence="14">
    <location>
        <position position="1392"/>
    </location>
</feature>
<feature type="splice variant" id="VSP_038000" description="In isoform 3." evidence="7">
    <original>LQESRGFRKKIKRLEESNKKLALELEHEKGKLTGLGQSNAALREH</original>
    <variation>VRPGHLLWRQRGAGHVSPGHAATRETRRTKLHRVPSVATFGVATF</variation>
    <location>
        <begin position="1090"/>
        <end position="1134"/>
    </location>
</feature>
<feature type="splice variant" id="VSP_038001" description="In isoform 3." evidence="7">
    <location>
        <begin position="1135"/>
        <end position="1498"/>
    </location>
</feature>
<feature type="splice variant" id="VSP_007728" description="In isoform 2." evidence="8">
    <original>RKEPKGEAS</original>
    <variation>VLRPASLPG</variation>
    <location>
        <begin position="1382"/>
        <end position="1390"/>
    </location>
</feature>
<feature type="splice variant" id="VSP_007729" description="In isoform 2." evidence="8">
    <location>
        <begin position="1391"/>
        <end position="1498"/>
    </location>
</feature>
<feature type="sequence variant" id="VAR_020153" description="In dbSNP:rs2291256.">
    <original>G</original>
    <variation>E</variation>
    <location>
        <position position="70"/>
    </location>
</feature>
<feature type="sequence variant" id="VAR_021901" description="In dbSNP:rs3741486.">
    <original>P</original>
    <variation>L</variation>
    <location>
        <position position="264"/>
    </location>
</feature>
<feature type="sequence variant" id="VAR_020154" description="In dbSNP:rs2291260.">
    <original>K</original>
    <variation>R</variation>
    <location>
        <position position="1185"/>
    </location>
</feature>
<feature type="mutagenesis site" description="Abolishes cleavage by caspase-2." evidence="4">
    <original>D</original>
    <variation>A</variation>
    <location>
        <position position="59"/>
    </location>
</feature>
<feature type="mutagenesis site" description="Loss of interaction with GOPC; when associated with A-128 and A-135." evidence="6">
    <original>L</original>
    <variation>A</variation>
    <location>
        <position position="121"/>
    </location>
</feature>
<feature type="mutagenesis site" description="Loss of interaction with GOPC; when associated with A-121 and A-135." evidence="6">
    <original>L</original>
    <variation>A</variation>
    <location>
        <position position="128"/>
    </location>
</feature>
<feature type="mutagenesis site" description="Loss of interaction with GOPC; when associated with A-121 and A-128." evidence="6">
    <original>L</original>
    <variation>A</variation>
    <location>
        <position position="135"/>
    </location>
</feature>
<feature type="mutagenesis site" description="Abolishes cleavage by caspase-3." evidence="4">
    <original>D</original>
    <variation>A</variation>
    <location>
        <position position="139"/>
    </location>
</feature>
<feature type="mutagenesis site" description="Abolishes cleavage by caspase-7." evidence="4">
    <original>D</original>
    <variation>A</variation>
    <location>
        <position position="311"/>
    </location>
</feature>
<feature type="sequence conflict" description="In Ref. 2; AAL93149." evidence="9" ref="2">
    <original>E</original>
    <variation>K</variation>
    <location>
        <position position="159"/>
    </location>
</feature>
<feature type="sequence conflict" description="In Ref. 1; BAA23661." evidence="9" ref="1">
    <original>L</original>
    <variation>I</variation>
    <location>
        <position position="609"/>
    </location>
</feature>
<feature type="sequence conflict" description="In Ref. 2; AAL93149." evidence="9" ref="2">
    <original>H</original>
    <variation>R</variation>
    <location>
        <position position="746"/>
    </location>
</feature>
<feature type="sequence conflict" description="In Ref. 4; AAA35921." evidence="9" ref="4">
    <original>A</original>
    <variation>V</variation>
    <location>
        <position position="785"/>
    </location>
</feature>
<feature type="sequence conflict" description="In Ref. 2; AAL93149." evidence="9" ref="2">
    <original>M</original>
    <variation>V</variation>
    <location>
        <position position="932"/>
    </location>
</feature>
<feature type="sequence conflict" description="In Ref. 2; AAL93149." evidence="9" ref="2">
    <original>K</original>
    <variation>R</variation>
    <location>
        <position position="1017"/>
    </location>
</feature>
<feature type="sequence conflict" description="In Ref. 2; AAL93149." evidence="9" ref="2">
    <original>V</original>
    <variation>A</variation>
    <location>
        <position position="1281"/>
    </location>
</feature>
<feature type="sequence conflict" description="In Ref. 2; AAL93149." evidence="9" ref="2">
    <original>R</original>
    <variation>W</variation>
    <location>
        <position position="1315"/>
    </location>
</feature>
<feature type="sequence conflict" description="In Ref. 2; AAL93149." evidence="9" ref="2">
    <original>Q</original>
    <variation>R</variation>
    <location>
        <position position="1443"/>
    </location>
</feature>
<sequence>MDGASAEQDGLQEDRSHSGPSSLPEAPLKPPGPLVPPDQQDKVQCAEVNRASTEGESPDGPGQGGLCQNGPTPPFPDPPSSLDPTTSPVGPDASPGVAGFHDNLRKSQGTSAEGSVRKEALQSLRLSLPMQETQLCSTDSPLPLEKEEQVRLQARKWLEEQLKQYRVKRQQERSSQPATKTRLFSTLDPELMLNPENLPRASTLAMTKEYSFLRTSVPRGPKVGSLGLPAHPREKKTSKSSKIRSLADYRTEDSNAGNSGGNVPAPDSTKGSLKQNRSSAASVVSEISLSPDTDDRLENTSLAGDSVSEVDGNDSDSSSYSSASTRGTYGILSKTVGTQDTPYMVNGQEIPADTLGQFPSIKDVLQAAAAEHQDQGQEVNGEVRSRRDSICSSVSLESSAAETQEEMLQVLKEKMRLEGQLEALSLEASQALKEKAELQAQLAALSTKLQAQVECSHSSQQRQDSLSSEVDTLKQSCWDLERAMTDLQNMLEAKNASLASSNNDLQVAEEQYQRLMAKVEDMQRSMLSKDNTVHDLRQQMTALQSQLQQVQLERTTLTSKLKASQAEISSLQSVRQWYQQQLALAQEARVRLQGEMAHIQVGQMTQAGLLEHLKLENVSLSQQLTETQHRSMKEKGRIAAQLQGIEADMLDQEAAFMQIQEAKTMVEEDLQRRLEEFEGERERLQRMADSAASLEQQLEQVKLTLLQRDQQLEALQQEHLDLMKQLTLTQEALQSREQSLDALQTHYDELQARLGELQGEAASREDTICLLQNEKIILEAALQAAKSGKEELDRGARRLEEGTEETSETLEKLREELAIKSGQVEHLQQETAALKKQMQKIKEQFLQQKVMVEAYRRDATSKDQLISELKATRKRLDSELKELRQELMQVHGEKRTAEAELSRLHREVAQVRQHMADLEGHLQSAQKERDEMETHLQSLQFDKEQMVAVTEANEALKKQIEELQQEARKAITEQKQKMRRLGSDLTSAQKEMKTKHKAYENAVGILSRRLQEALAAKEAADAELGQLRAQGGSSDSSLALHERIQALEAELQAVSHSKTLLEKELQEVIALTSQELEESREKVLELEDELQESRGFRKKIKRLEESNKKLALELEHEKGKLTGLGQSNAALREHNSILETALAKREADLVQLNLQVQAVLQRKEEEDRQMKHLVQALQASLEKEKEKVNSLKEQVAAAKVEAGHNRRHFKAASLELSEVKKELQAKEHLVQKLQAEADDLQIREGKHSQEIAQFQAELAEARAQLQLLQKQLDEQLSKQPVGNQEMENLKWEVDQKEREIQSLKQQLDLTEQQGRKELEGLQQLLQNVKSELEMAQEDLSMTQKDKFMLQAKVSELKNNMKTLLQQNQQLKLDLRRGAAKTRKEPKGEASSSNPATPIKIPDCPVPASLLEELLRPPPAVSKEPLKNLNSCLQQLKQEMDSLQRQMEEHALTVHESLSSWTPLEPATASPVPPGGHAGPRGDPQRHSQSRASKEGPGE</sequence>
<accession>Q08378</accession>
<accession>A5PKX6</accession>
<accession>O43241</accession>
<accession>Q6P9C7</accession>
<accession>Q86XW3</accession>
<accession>Q8TDA9</accession>
<accession>Q8WZA3</accession>
<reference key="1">
    <citation type="journal article" date="1997" name="J. Biol. Chem.">
        <title>Molecular characterization of GCP170, a 170-kDa protein associated with the cytoplasmic face of the Golgi membrane.</title>
        <authorList>
            <person name="Misumi Y."/>
            <person name="Sohda M."/>
            <person name="Yano A."/>
            <person name="Fujiwara T."/>
            <person name="Ikehara Y."/>
        </authorList>
    </citation>
    <scope>NUCLEOTIDE SEQUENCE [MRNA] (ISOFORM 1)</scope>
    <scope>PHOSPHORYLATION</scope>
    <scope>SUBCELLULAR LOCATION</scope>
    <source>
        <tissue>Pancreatic carcinoma</tissue>
    </source>
</reference>
<reference key="2">
    <citation type="journal article" date="2000" name="J. Cell Biol.">
        <title>Caspase-2 is localized at the Golgi complex and cleaves golgin-160 during apoptosis.</title>
        <authorList>
            <person name="Mancini M."/>
            <person name="Machamer C.E."/>
            <person name="Roy S."/>
            <person name="Nicholson D.W."/>
            <person name="Thornberry N.A."/>
            <person name="Casciola-Rosen L.A."/>
            <person name="Rosen A."/>
        </authorList>
    </citation>
    <scope>NUCLEOTIDE SEQUENCE [MRNA] (ISOFORM 1)</scope>
    <scope>MUTAGENESIS OF ASP-59; ASP-139 AND ASP-311</scope>
    <scope>SUBCELLULAR LOCATION</scope>
    <scope>PHOSPHORYLATION</scope>
    <scope>CLEAVAGE BY CASPASES</scope>
</reference>
<reference key="3">
    <citation type="submission" date="1999-05" db="EMBL/GenBank/DDBJ databases">
        <title>Molecular characterization of Mea-2/golgin-160/GCP170 gene encoding a Golgi membrane associated protein.</title>
        <authorList>
            <person name="Kondo M."/>
            <person name="Matsukuma S."/>
            <person name="Hirose F."/>
            <person name="Matsuda M."/>
            <person name="Yoshihara M."/>
            <person name="Misumi Y."/>
            <person name="Aida M."/>
            <person name="Ikehara M."/>
            <person name="Sutou S."/>
        </authorList>
    </citation>
    <scope>NUCLEOTIDE SEQUENCE [MRNA] (ISOFORM 2)</scope>
</reference>
<reference key="4">
    <citation type="journal article" date="2004" name="Genome Res.">
        <title>The status, quality, and expansion of the NIH full-length cDNA project: the Mammalian Gene Collection (MGC).</title>
        <authorList>
            <consortium name="The MGC Project Team"/>
        </authorList>
    </citation>
    <scope>NUCLEOTIDE SEQUENCE [LARGE SCALE MRNA] (ISOFORM 3)</scope>
    <scope>NUCLEOTIDE SEQUENCE [LARGE SCALE MRNA] OF 1-840 (ISOFORMS 1/2/3)</scope>
    <source>
        <tissue>Placenta</tissue>
    </source>
</reference>
<reference key="5">
    <citation type="journal article" date="1993" name="J. Exp. Med.">
        <title>Molecular characterization of two human autoantigens: unique cDNAs encoding 95- and 160-kD proteins of a putative family in the Golgi complex.</title>
        <authorList>
            <person name="Fritzler M.J."/>
            <person name="Hamel J.C."/>
            <person name="Ochs R.L."/>
            <person name="Chan E.K.L."/>
        </authorList>
    </citation>
    <scope>NUCLEOTIDE SEQUENCE [MRNA] OF 780-1348</scope>
    <source>
        <tissue>Liver</tissue>
    </source>
</reference>
<reference key="6">
    <citation type="journal article" date="2002" name="J. Biol. Chem.">
        <title>The NH2-terminal domain of Golgin-160 contains both Golgi and nuclear targeting information.</title>
        <authorList>
            <person name="Hicks S.W."/>
            <person name="Machamer C.E."/>
        </authorList>
    </citation>
    <scope>DIMERIZATION</scope>
    <scope>SUBCELLULAR LOCATION</scope>
</reference>
<reference key="7">
    <citation type="journal article" date="2003" name="J. Biol. Chem.">
        <title>Identification and characterization of GCP16, a novel acylated Golgi protein that interacts with GCP170.</title>
        <authorList>
            <person name="Ohta E."/>
            <person name="Misumi Y."/>
            <person name="Sohda M."/>
            <person name="Fujiwara T."/>
            <person name="Yano A."/>
            <person name="Ikehara Y."/>
        </authorList>
    </citation>
    <scope>INTERACTION WITH GOLGA7</scope>
    <scope>SUBCELLULAR LOCATION</scope>
</reference>
<reference key="8">
    <citation type="journal article" date="2003" name="Nature">
        <title>Proteomic characterization of the human centrosome by protein correlation profiling.</title>
        <authorList>
            <person name="Andersen J.S."/>
            <person name="Wilkinson C.J."/>
            <person name="Mayor T."/>
            <person name="Mortensen P."/>
            <person name="Nigg E.A."/>
            <person name="Mann M."/>
        </authorList>
    </citation>
    <scope>IDENTIFICATION BY MASS SPECTROMETRY</scope>
    <source>
        <tissue>Lymphoblast</tissue>
    </source>
</reference>
<reference key="9">
    <citation type="journal article" date="2005" name="J. Biol. Chem.">
        <title>Isoform-specific interaction of golgin-160 with the Golgi-associated protein PIST.</title>
        <authorList>
            <person name="Hicks S.W."/>
            <person name="Machamer C.E."/>
        </authorList>
    </citation>
    <scope>INTERACTION WITH GOPC</scope>
    <scope>TISSUE SPECIFICITY</scope>
    <scope>ALTERNATIVE SPLICING (ISOFORM 3)</scope>
    <scope>SUBCELLULAR LOCATION</scope>
    <scope>MUTAGENESIS OF LEU-121; LEU-128 AND LEU-135</scope>
</reference>
<reference key="10">
    <citation type="journal article" date="2009" name="Anal. Chem.">
        <title>Lys-N and trypsin cover complementary parts of the phosphoproteome in a refined SCX-based approach.</title>
        <authorList>
            <person name="Gauci S."/>
            <person name="Helbig A.O."/>
            <person name="Slijper M."/>
            <person name="Krijgsveld J."/>
            <person name="Heck A.J."/>
            <person name="Mohammed S."/>
        </authorList>
    </citation>
    <scope>ACETYLATION [LARGE SCALE ANALYSIS] AT MET-1</scope>
    <scope>IDENTIFICATION BY MASS SPECTROMETRY [LARGE SCALE ANALYSIS]</scope>
</reference>
<reference key="11">
    <citation type="journal article" date="2010" name="Sci. Signal.">
        <title>Quantitative phosphoproteomics reveals widespread full phosphorylation site occupancy during mitosis.</title>
        <authorList>
            <person name="Olsen J.V."/>
            <person name="Vermeulen M."/>
            <person name="Santamaria A."/>
            <person name="Kumar C."/>
            <person name="Miller M.L."/>
            <person name="Jensen L.J."/>
            <person name="Gnad F."/>
            <person name="Cox J."/>
            <person name="Jensen T.S."/>
            <person name="Nigg E.A."/>
            <person name="Brunak S."/>
            <person name="Mann M."/>
        </authorList>
    </citation>
    <scope>PHOSPHORYLATION [LARGE SCALE ANALYSIS] AT SER-385</scope>
    <scope>IDENTIFICATION BY MASS SPECTROMETRY [LARGE SCALE ANALYSIS]</scope>
    <source>
        <tissue>Cervix carcinoma</tissue>
    </source>
</reference>
<reference key="12">
    <citation type="journal article" date="2011" name="BMC Syst. Biol.">
        <title>Initial characterization of the human central proteome.</title>
        <authorList>
            <person name="Burkard T.R."/>
            <person name="Planyavsky M."/>
            <person name="Kaupe I."/>
            <person name="Breitwieser F.P."/>
            <person name="Buerckstuemmer T."/>
            <person name="Bennett K.L."/>
            <person name="Superti-Furga G."/>
            <person name="Colinge J."/>
        </authorList>
    </citation>
    <scope>IDENTIFICATION BY MASS SPECTROMETRY [LARGE SCALE ANALYSIS]</scope>
</reference>
<reference key="13">
    <citation type="journal article" date="2012" name="Mol. Cell. Proteomics">
        <title>Comparative large-scale characterisation of plant vs. mammal proteins reveals similar and idiosyncratic N-alpha acetylation features.</title>
        <authorList>
            <person name="Bienvenut W.V."/>
            <person name="Sumpton D."/>
            <person name="Martinez A."/>
            <person name="Lilla S."/>
            <person name="Espagne C."/>
            <person name="Meinnel T."/>
            <person name="Giglione C."/>
        </authorList>
    </citation>
    <scope>ACETYLATION [LARGE SCALE ANALYSIS] AT MET-1</scope>
    <scope>IDENTIFICATION BY MASS SPECTROMETRY [LARGE SCALE ANALYSIS]</scope>
</reference>
<reference key="14">
    <citation type="journal article" date="2012" name="Proc. Natl. Acad. Sci. U.S.A.">
        <title>N-terminal acetylome analyses and functional insights of the N-terminal acetyltransferase NatB.</title>
        <authorList>
            <person name="Van Damme P."/>
            <person name="Lasa M."/>
            <person name="Polevoda B."/>
            <person name="Gazquez C."/>
            <person name="Elosegui-Artola A."/>
            <person name="Kim D.S."/>
            <person name="De Juan-Pardo E."/>
            <person name="Demeyer K."/>
            <person name="Hole K."/>
            <person name="Larrea E."/>
            <person name="Timmerman E."/>
            <person name="Prieto J."/>
            <person name="Arnesen T."/>
            <person name="Sherman F."/>
            <person name="Gevaert K."/>
            <person name="Aldabe R."/>
        </authorList>
    </citation>
    <scope>ACETYLATION [LARGE SCALE ANALYSIS] AT MET-1</scope>
    <scope>IDENTIFICATION BY MASS SPECTROMETRY [LARGE SCALE ANALYSIS]</scope>
</reference>
<reference key="15">
    <citation type="journal article" date="2013" name="J. Proteome Res.">
        <title>Toward a comprehensive characterization of a human cancer cell phosphoproteome.</title>
        <authorList>
            <person name="Zhou H."/>
            <person name="Di Palma S."/>
            <person name="Preisinger C."/>
            <person name="Peng M."/>
            <person name="Polat A.N."/>
            <person name="Heck A.J."/>
            <person name="Mohammed S."/>
        </authorList>
    </citation>
    <scope>PHOSPHORYLATION [LARGE SCALE ANALYSIS] AT SER-272; SER-385; SER-465 AND SER-1392</scope>
    <scope>IDENTIFICATION BY MASS SPECTROMETRY [LARGE SCALE ANALYSIS]</scope>
    <source>
        <tissue>Erythroleukemia</tissue>
    </source>
</reference>
<reference key="16">
    <citation type="journal article" date="2014" name="J. Proteomics">
        <title>An enzyme assisted RP-RPLC approach for in-depth analysis of human liver phosphoproteome.</title>
        <authorList>
            <person name="Bian Y."/>
            <person name="Song C."/>
            <person name="Cheng K."/>
            <person name="Dong M."/>
            <person name="Wang F."/>
            <person name="Huang J."/>
            <person name="Sun D."/>
            <person name="Wang L."/>
            <person name="Ye M."/>
            <person name="Zou H."/>
        </authorList>
    </citation>
    <scope>PHOSPHORYLATION [LARGE SCALE ANALYSIS] AT SER-18; SER-389 AND SER-983</scope>
    <scope>IDENTIFICATION BY MASS SPECTROMETRY [LARGE SCALE ANALYSIS]</scope>
    <source>
        <tissue>Liver</tissue>
    </source>
</reference>
<organism>
    <name type="scientific">Homo sapiens</name>
    <name type="common">Human</name>
    <dbReference type="NCBI Taxonomy" id="9606"/>
    <lineage>
        <taxon>Eukaryota</taxon>
        <taxon>Metazoa</taxon>
        <taxon>Chordata</taxon>
        <taxon>Craniata</taxon>
        <taxon>Vertebrata</taxon>
        <taxon>Euteleostomi</taxon>
        <taxon>Mammalia</taxon>
        <taxon>Eutheria</taxon>
        <taxon>Euarchontoglires</taxon>
        <taxon>Primates</taxon>
        <taxon>Haplorrhini</taxon>
        <taxon>Catarrhini</taxon>
        <taxon>Hominidae</taxon>
        <taxon>Homo</taxon>
    </lineage>
</organism>